<comment type="function">
    <text evidence="1">Catalyzes the ATP-dependent amination of UTP to CTP with either L-glutamine or ammonia as the source of nitrogen. Regulates intracellular CTP levels through interactions with the four ribonucleotide triphosphates.</text>
</comment>
<comment type="catalytic activity">
    <reaction evidence="1">
        <text>UTP + L-glutamine + ATP + H2O = CTP + L-glutamate + ADP + phosphate + 2 H(+)</text>
        <dbReference type="Rhea" id="RHEA:26426"/>
        <dbReference type="ChEBI" id="CHEBI:15377"/>
        <dbReference type="ChEBI" id="CHEBI:15378"/>
        <dbReference type="ChEBI" id="CHEBI:29985"/>
        <dbReference type="ChEBI" id="CHEBI:30616"/>
        <dbReference type="ChEBI" id="CHEBI:37563"/>
        <dbReference type="ChEBI" id="CHEBI:43474"/>
        <dbReference type="ChEBI" id="CHEBI:46398"/>
        <dbReference type="ChEBI" id="CHEBI:58359"/>
        <dbReference type="ChEBI" id="CHEBI:456216"/>
        <dbReference type="EC" id="6.3.4.2"/>
    </reaction>
</comment>
<comment type="catalytic activity">
    <reaction evidence="1">
        <text>L-glutamine + H2O = L-glutamate + NH4(+)</text>
        <dbReference type="Rhea" id="RHEA:15889"/>
        <dbReference type="ChEBI" id="CHEBI:15377"/>
        <dbReference type="ChEBI" id="CHEBI:28938"/>
        <dbReference type="ChEBI" id="CHEBI:29985"/>
        <dbReference type="ChEBI" id="CHEBI:58359"/>
    </reaction>
</comment>
<comment type="catalytic activity">
    <reaction evidence="1">
        <text>UTP + NH4(+) + ATP = CTP + ADP + phosphate + 2 H(+)</text>
        <dbReference type="Rhea" id="RHEA:16597"/>
        <dbReference type="ChEBI" id="CHEBI:15378"/>
        <dbReference type="ChEBI" id="CHEBI:28938"/>
        <dbReference type="ChEBI" id="CHEBI:30616"/>
        <dbReference type="ChEBI" id="CHEBI:37563"/>
        <dbReference type="ChEBI" id="CHEBI:43474"/>
        <dbReference type="ChEBI" id="CHEBI:46398"/>
        <dbReference type="ChEBI" id="CHEBI:456216"/>
    </reaction>
</comment>
<comment type="activity regulation">
    <text evidence="1">Allosterically activated by GTP, when glutamine is the substrate; GTP has no effect on the reaction when ammonia is the substrate. The allosteric effector GTP functions by stabilizing the protein conformation that binds the tetrahedral intermediate(s) formed during glutamine hydrolysis. Inhibited by the product CTP, via allosteric rather than competitive inhibition.</text>
</comment>
<comment type="pathway">
    <text evidence="1">Pyrimidine metabolism; CTP biosynthesis via de novo pathway; CTP from UDP: step 2/2.</text>
</comment>
<comment type="subunit">
    <text evidence="1">Homotetramer.</text>
</comment>
<comment type="miscellaneous">
    <text evidence="1">CTPSs have evolved a hybrid strategy for distinguishing between UTP and CTP. The overlapping regions of the product feedback inhibitory and substrate sites recognize a common feature in both compounds, the triphosphate moiety. To differentiate isosteric substrate and product pyrimidine rings, an additional pocket far from the expected kinase/ligase catalytic site, specifically recognizes the cytosine and ribose portions of the product inhibitor.</text>
</comment>
<comment type="similarity">
    <text evidence="1">Belongs to the CTP synthase family.</text>
</comment>
<dbReference type="EC" id="6.3.4.2" evidence="1"/>
<dbReference type="EMBL" id="CP000577">
    <property type="protein sequence ID" value="ABN77116.1"/>
    <property type="molecule type" value="Genomic_DNA"/>
</dbReference>
<dbReference type="RefSeq" id="WP_002720532.1">
    <property type="nucleotide sequence ID" value="NC_009049.1"/>
</dbReference>
<dbReference type="SMR" id="A3PLA0"/>
<dbReference type="MEROPS" id="C26.964"/>
<dbReference type="KEGG" id="rsh:Rsph17029_2012"/>
<dbReference type="HOGENOM" id="CLU_011675_5_0_5"/>
<dbReference type="UniPathway" id="UPA00159">
    <property type="reaction ID" value="UER00277"/>
</dbReference>
<dbReference type="GO" id="GO:0005829">
    <property type="term" value="C:cytosol"/>
    <property type="evidence" value="ECO:0007669"/>
    <property type="project" value="TreeGrafter"/>
</dbReference>
<dbReference type="GO" id="GO:0005524">
    <property type="term" value="F:ATP binding"/>
    <property type="evidence" value="ECO:0007669"/>
    <property type="project" value="UniProtKB-KW"/>
</dbReference>
<dbReference type="GO" id="GO:0003883">
    <property type="term" value="F:CTP synthase activity"/>
    <property type="evidence" value="ECO:0007669"/>
    <property type="project" value="UniProtKB-UniRule"/>
</dbReference>
<dbReference type="GO" id="GO:0004359">
    <property type="term" value="F:glutaminase activity"/>
    <property type="evidence" value="ECO:0007669"/>
    <property type="project" value="RHEA"/>
</dbReference>
<dbReference type="GO" id="GO:0042802">
    <property type="term" value="F:identical protein binding"/>
    <property type="evidence" value="ECO:0007669"/>
    <property type="project" value="TreeGrafter"/>
</dbReference>
<dbReference type="GO" id="GO:0046872">
    <property type="term" value="F:metal ion binding"/>
    <property type="evidence" value="ECO:0007669"/>
    <property type="project" value="UniProtKB-KW"/>
</dbReference>
<dbReference type="GO" id="GO:0044210">
    <property type="term" value="P:'de novo' CTP biosynthetic process"/>
    <property type="evidence" value="ECO:0007669"/>
    <property type="project" value="UniProtKB-UniRule"/>
</dbReference>
<dbReference type="GO" id="GO:0019856">
    <property type="term" value="P:pyrimidine nucleobase biosynthetic process"/>
    <property type="evidence" value="ECO:0007669"/>
    <property type="project" value="TreeGrafter"/>
</dbReference>
<dbReference type="CDD" id="cd03113">
    <property type="entry name" value="CTPS_N"/>
    <property type="match status" value="1"/>
</dbReference>
<dbReference type="CDD" id="cd01746">
    <property type="entry name" value="GATase1_CTP_Synthase"/>
    <property type="match status" value="1"/>
</dbReference>
<dbReference type="FunFam" id="3.40.50.300:FF:000009">
    <property type="entry name" value="CTP synthase"/>
    <property type="match status" value="1"/>
</dbReference>
<dbReference type="FunFam" id="3.40.50.880:FF:000002">
    <property type="entry name" value="CTP synthase"/>
    <property type="match status" value="1"/>
</dbReference>
<dbReference type="Gene3D" id="3.40.50.880">
    <property type="match status" value="1"/>
</dbReference>
<dbReference type="Gene3D" id="3.40.50.300">
    <property type="entry name" value="P-loop containing nucleotide triphosphate hydrolases"/>
    <property type="match status" value="1"/>
</dbReference>
<dbReference type="HAMAP" id="MF_01227">
    <property type="entry name" value="PyrG"/>
    <property type="match status" value="1"/>
</dbReference>
<dbReference type="InterPro" id="IPR029062">
    <property type="entry name" value="Class_I_gatase-like"/>
</dbReference>
<dbReference type="InterPro" id="IPR004468">
    <property type="entry name" value="CTP_synthase"/>
</dbReference>
<dbReference type="InterPro" id="IPR017456">
    <property type="entry name" value="CTP_synthase_N"/>
</dbReference>
<dbReference type="InterPro" id="IPR017926">
    <property type="entry name" value="GATASE"/>
</dbReference>
<dbReference type="InterPro" id="IPR033828">
    <property type="entry name" value="GATase1_CTP_Synthase"/>
</dbReference>
<dbReference type="InterPro" id="IPR027417">
    <property type="entry name" value="P-loop_NTPase"/>
</dbReference>
<dbReference type="NCBIfam" id="NF003792">
    <property type="entry name" value="PRK05380.1"/>
    <property type="match status" value="1"/>
</dbReference>
<dbReference type="NCBIfam" id="TIGR00337">
    <property type="entry name" value="PyrG"/>
    <property type="match status" value="1"/>
</dbReference>
<dbReference type="PANTHER" id="PTHR11550">
    <property type="entry name" value="CTP SYNTHASE"/>
    <property type="match status" value="1"/>
</dbReference>
<dbReference type="PANTHER" id="PTHR11550:SF0">
    <property type="entry name" value="CTP SYNTHASE-RELATED"/>
    <property type="match status" value="1"/>
</dbReference>
<dbReference type="Pfam" id="PF06418">
    <property type="entry name" value="CTP_synth_N"/>
    <property type="match status" value="1"/>
</dbReference>
<dbReference type="Pfam" id="PF00117">
    <property type="entry name" value="GATase"/>
    <property type="match status" value="1"/>
</dbReference>
<dbReference type="SUPFAM" id="SSF52317">
    <property type="entry name" value="Class I glutamine amidotransferase-like"/>
    <property type="match status" value="1"/>
</dbReference>
<dbReference type="SUPFAM" id="SSF52540">
    <property type="entry name" value="P-loop containing nucleoside triphosphate hydrolases"/>
    <property type="match status" value="1"/>
</dbReference>
<dbReference type="PROSITE" id="PS51273">
    <property type="entry name" value="GATASE_TYPE_1"/>
    <property type="match status" value="1"/>
</dbReference>
<reference key="1">
    <citation type="submission" date="2007-02" db="EMBL/GenBank/DDBJ databases">
        <title>Complete sequence of chromosome 1 of Rhodobacter sphaeroides ATCC 17029.</title>
        <authorList>
            <person name="Copeland A."/>
            <person name="Lucas S."/>
            <person name="Lapidus A."/>
            <person name="Barry K."/>
            <person name="Detter J.C."/>
            <person name="Glavina del Rio T."/>
            <person name="Hammon N."/>
            <person name="Israni S."/>
            <person name="Dalin E."/>
            <person name="Tice H."/>
            <person name="Pitluck S."/>
            <person name="Kiss H."/>
            <person name="Brettin T."/>
            <person name="Bruce D."/>
            <person name="Han C."/>
            <person name="Tapia R."/>
            <person name="Gilna P."/>
            <person name="Schmutz J."/>
            <person name="Larimer F."/>
            <person name="Land M."/>
            <person name="Hauser L."/>
            <person name="Kyrpides N."/>
            <person name="Mikhailova N."/>
            <person name="Richardson P."/>
            <person name="Mackenzie C."/>
            <person name="Choudhary M."/>
            <person name="Donohue T.J."/>
            <person name="Kaplan S."/>
        </authorList>
    </citation>
    <scope>NUCLEOTIDE SEQUENCE [LARGE SCALE GENOMIC DNA]</scope>
    <source>
        <strain>ATCC 17029 / ATH 2.4.9</strain>
    </source>
</reference>
<proteinExistence type="inferred from homology"/>
<name>PYRG_CERS1</name>
<organism>
    <name type="scientific">Cereibacter sphaeroides (strain ATCC 17029 / ATH 2.4.9)</name>
    <name type="common">Rhodobacter sphaeroides</name>
    <dbReference type="NCBI Taxonomy" id="349101"/>
    <lineage>
        <taxon>Bacteria</taxon>
        <taxon>Pseudomonadati</taxon>
        <taxon>Pseudomonadota</taxon>
        <taxon>Alphaproteobacteria</taxon>
        <taxon>Rhodobacterales</taxon>
        <taxon>Paracoccaceae</taxon>
        <taxon>Cereibacter</taxon>
    </lineage>
</organism>
<protein>
    <recommendedName>
        <fullName evidence="1">CTP synthase</fullName>
        <ecNumber evidence="1">6.3.4.2</ecNumber>
    </recommendedName>
    <alternativeName>
        <fullName evidence="1">Cytidine 5'-triphosphate synthase</fullName>
    </alternativeName>
    <alternativeName>
        <fullName evidence="1">Cytidine triphosphate synthetase</fullName>
        <shortName evidence="1">CTP synthetase</shortName>
        <shortName evidence="1">CTPS</shortName>
    </alternativeName>
    <alternativeName>
        <fullName evidence="1">UTP--ammonia ligase</fullName>
    </alternativeName>
</protein>
<keyword id="KW-0067">ATP-binding</keyword>
<keyword id="KW-0315">Glutamine amidotransferase</keyword>
<keyword id="KW-0436">Ligase</keyword>
<keyword id="KW-0460">Magnesium</keyword>
<keyword id="KW-0479">Metal-binding</keyword>
<keyword id="KW-0547">Nucleotide-binding</keyword>
<keyword id="KW-0665">Pyrimidine biosynthesis</keyword>
<evidence type="ECO:0000255" key="1">
    <source>
        <dbReference type="HAMAP-Rule" id="MF_01227"/>
    </source>
</evidence>
<feature type="chain" id="PRO_1000139549" description="CTP synthase">
    <location>
        <begin position="1"/>
        <end position="547"/>
    </location>
</feature>
<feature type="domain" description="Glutamine amidotransferase type-1" evidence="1">
    <location>
        <begin position="291"/>
        <end position="546"/>
    </location>
</feature>
<feature type="region of interest" description="Amidoligase domain" evidence="1">
    <location>
        <begin position="1"/>
        <end position="265"/>
    </location>
</feature>
<feature type="active site" description="Nucleophile; for glutamine hydrolysis" evidence="1">
    <location>
        <position position="380"/>
    </location>
</feature>
<feature type="active site" evidence="1">
    <location>
        <position position="519"/>
    </location>
</feature>
<feature type="active site" evidence="1">
    <location>
        <position position="521"/>
    </location>
</feature>
<feature type="binding site" evidence="1">
    <location>
        <position position="13"/>
    </location>
    <ligand>
        <name>CTP</name>
        <dbReference type="ChEBI" id="CHEBI:37563"/>
        <note>allosteric inhibitor</note>
    </ligand>
</feature>
<feature type="binding site" evidence="1">
    <location>
        <position position="13"/>
    </location>
    <ligand>
        <name>UTP</name>
        <dbReference type="ChEBI" id="CHEBI:46398"/>
    </ligand>
</feature>
<feature type="binding site" evidence="1">
    <location>
        <begin position="14"/>
        <end position="19"/>
    </location>
    <ligand>
        <name>ATP</name>
        <dbReference type="ChEBI" id="CHEBI:30616"/>
    </ligand>
</feature>
<feature type="binding site" evidence="1">
    <location>
        <position position="71"/>
    </location>
    <ligand>
        <name>ATP</name>
        <dbReference type="ChEBI" id="CHEBI:30616"/>
    </ligand>
</feature>
<feature type="binding site" evidence="1">
    <location>
        <position position="71"/>
    </location>
    <ligand>
        <name>Mg(2+)</name>
        <dbReference type="ChEBI" id="CHEBI:18420"/>
    </ligand>
</feature>
<feature type="binding site" evidence="1">
    <location>
        <position position="139"/>
    </location>
    <ligand>
        <name>Mg(2+)</name>
        <dbReference type="ChEBI" id="CHEBI:18420"/>
    </ligand>
</feature>
<feature type="binding site" evidence="1">
    <location>
        <begin position="146"/>
        <end position="148"/>
    </location>
    <ligand>
        <name>CTP</name>
        <dbReference type="ChEBI" id="CHEBI:37563"/>
        <note>allosteric inhibitor</note>
    </ligand>
</feature>
<feature type="binding site" evidence="1">
    <location>
        <begin position="186"/>
        <end position="191"/>
    </location>
    <ligand>
        <name>CTP</name>
        <dbReference type="ChEBI" id="CHEBI:37563"/>
        <note>allosteric inhibitor</note>
    </ligand>
</feature>
<feature type="binding site" evidence="1">
    <location>
        <begin position="186"/>
        <end position="191"/>
    </location>
    <ligand>
        <name>UTP</name>
        <dbReference type="ChEBI" id="CHEBI:46398"/>
    </ligand>
</feature>
<feature type="binding site" evidence="1">
    <location>
        <position position="222"/>
    </location>
    <ligand>
        <name>CTP</name>
        <dbReference type="ChEBI" id="CHEBI:37563"/>
        <note>allosteric inhibitor</note>
    </ligand>
</feature>
<feature type="binding site" evidence="1">
    <location>
        <position position="222"/>
    </location>
    <ligand>
        <name>UTP</name>
        <dbReference type="ChEBI" id="CHEBI:46398"/>
    </ligand>
</feature>
<feature type="binding site" evidence="1">
    <location>
        <position position="353"/>
    </location>
    <ligand>
        <name>L-glutamine</name>
        <dbReference type="ChEBI" id="CHEBI:58359"/>
    </ligand>
</feature>
<feature type="binding site" evidence="1">
    <location>
        <begin position="381"/>
        <end position="384"/>
    </location>
    <ligand>
        <name>L-glutamine</name>
        <dbReference type="ChEBI" id="CHEBI:58359"/>
    </ligand>
</feature>
<feature type="binding site" evidence="1">
    <location>
        <position position="404"/>
    </location>
    <ligand>
        <name>L-glutamine</name>
        <dbReference type="ChEBI" id="CHEBI:58359"/>
    </ligand>
</feature>
<feature type="binding site" evidence="1">
    <location>
        <position position="474"/>
    </location>
    <ligand>
        <name>L-glutamine</name>
        <dbReference type="ChEBI" id="CHEBI:58359"/>
    </ligand>
</feature>
<accession>A3PLA0</accession>
<sequence>MARYVFITGGVVSSLGKGLASAALGALLQARGFSVRLRKLDPYLNVDPGTMSPFEHGEVFVTDDGAETDLDLGHYERFTGVSARKTDSVSSGRIYSNVLEKERRGDYLGKTIQVIPHVTNEIKDFLRVGEDEVDFMLCEIGGTVGDIEGLPFFEAIRQFAQDKPRGQCIFVHLTLLPYVSASGELKTKPTQHSVKELRSIGIAPDVLLLRSERAIPEKEREKIALFCNVRKEAVIAAYDLKTIYEAPLAYHREGLDQAVLDAFGISPAPKPNLDRWVDVMDRLENAEGEVRVAIVGKYTQLEDAYKSIAEALTHGGMANRTRVRAEWINAELFEREDPSPFLEGFHAILVPGGFGERGTEGKIRAAQYAREKGIPYLGICLGMQMAVIEAARNLAQVKDAGSEEFDHEVGKKRFTPVVYHLKEWIQGNHIVERKHDDDKGGTMRLGAYTAALTPGSRVSEIYHATEIEERHRHRYEVDVRYREALEGCGLTFSGMSPDGRLPEIVEIKDHPWFIGVQFHPELKSKPFAPHPLFADFVRAAVEVSRLV</sequence>
<gene>
    <name evidence="1" type="primary">pyrG</name>
    <name type="ordered locus">Rsph17029_2012</name>
</gene>